<feature type="chain" id="PRO_0000424785" description="Non-specific phospholipase C3">
    <location>
        <begin position="1"/>
        <end position="523"/>
    </location>
</feature>
<feature type="region of interest" description="Disordered" evidence="1">
    <location>
        <begin position="44"/>
        <end position="64"/>
    </location>
</feature>
<feature type="compositionally biased region" description="Polar residues" evidence="1">
    <location>
        <begin position="52"/>
        <end position="64"/>
    </location>
</feature>
<feature type="sequence conflict" description="In Ref. 4; AAL38718." evidence="4" ref="4">
    <original>E</original>
    <variation>G</variation>
    <location>
        <position position="413"/>
    </location>
</feature>
<accession>Q9SRQ6</accession>
<accession>Q8VZ53</accession>
<name>NPC3_ARATH</name>
<gene>
    <name type="primary">NPC3</name>
    <name type="ordered locus">At3g03520</name>
    <name type="ORF">T21P5.6</name>
</gene>
<protein>
    <recommendedName>
        <fullName>Non-specific phospholipase C3</fullName>
        <ecNumber evidence="2">3.1.3.106</ecNumber>
    </recommendedName>
</protein>
<organism>
    <name type="scientific">Arabidopsis thaliana</name>
    <name type="common">Mouse-ear cress</name>
    <dbReference type="NCBI Taxonomy" id="3702"/>
    <lineage>
        <taxon>Eukaryota</taxon>
        <taxon>Viridiplantae</taxon>
        <taxon>Streptophyta</taxon>
        <taxon>Embryophyta</taxon>
        <taxon>Tracheophyta</taxon>
        <taxon>Spermatophyta</taxon>
        <taxon>Magnoliopsida</taxon>
        <taxon>eudicotyledons</taxon>
        <taxon>Gunneridae</taxon>
        <taxon>Pentapetalae</taxon>
        <taxon>rosids</taxon>
        <taxon>malvids</taxon>
        <taxon>Brassicales</taxon>
        <taxon>Brassicaceae</taxon>
        <taxon>Camelineae</taxon>
        <taxon>Arabidopsis</taxon>
    </lineage>
</organism>
<keyword id="KW-0378">Hydrolase</keyword>
<keyword id="KW-1185">Reference proteome</keyword>
<reference key="1">
    <citation type="journal article" date="2005" name="J. Biol. Chem.">
        <title>A novel phosphatidylcholine-hydrolyzing phospholipase C induced by phosphate starvation in Arabidopsis.</title>
        <authorList>
            <person name="Nakamura Y."/>
            <person name="Awai K."/>
            <person name="Masuda T."/>
            <person name="Yoshioka Y."/>
            <person name="Takamiya K."/>
            <person name="Ohta H."/>
        </authorList>
    </citation>
    <scope>NUCLEOTIDE SEQUENCE [MRNA]</scope>
    <scope>LACK OF INDUCTION BY PHOSPHATE DEPRIVATION</scope>
</reference>
<reference key="2">
    <citation type="journal article" date="2000" name="Nature">
        <title>Sequence and analysis of chromosome 3 of the plant Arabidopsis thaliana.</title>
        <authorList>
            <person name="Salanoubat M."/>
            <person name="Lemcke K."/>
            <person name="Rieger M."/>
            <person name="Ansorge W."/>
            <person name="Unseld M."/>
            <person name="Fartmann B."/>
            <person name="Valle G."/>
            <person name="Bloecker H."/>
            <person name="Perez-Alonso M."/>
            <person name="Obermaier B."/>
            <person name="Delseny M."/>
            <person name="Boutry M."/>
            <person name="Grivell L.A."/>
            <person name="Mache R."/>
            <person name="Puigdomenech P."/>
            <person name="De Simone V."/>
            <person name="Choisne N."/>
            <person name="Artiguenave F."/>
            <person name="Robert C."/>
            <person name="Brottier P."/>
            <person name="Wincker P."/>
            <person name="Cattolico L."/>
            <person name="Weissenbach J."/>
            <person name="Saurin W."/>
            <person name="Quetier F."/>
            <person name="Schaefer M."/>
            <person name="Mueller-Auer S."/>
            <person name="Gabel C."/>
            <person name="Fuchs M."/>
            <person name="Benes V."/>
            <person name="Wurmbach E."/>
            <person name="Drzonek H."/>
            <person name="Erfle H."/>
            <person name="Jordan N."/>
            <person name="Bangert S."/>
            <person name="Wiedelmann R."/>
            <person name="Kranz H."/>
            <person name="Voss H."/>
            <person name="Holland R."/>
            <person name="Brandt P."/>
            <person name="Nyakatura G."/>
            <person name="Vezzi A."/>
            <person name="D'Angelo M."/>
            <person name="Pallavicini A."/>
            <person name="Toppo S."/>
            <person name="Simionati B."/>
            <person name="Conrad A."/>
            <person name="Hornischer K."/>
            <person name="Kauer G."/>
            <person name="Loehnert T.-H."/>
            <person name="Nordsiek G."/>
            <person name="Reichelt J."/>
            <person name="Scharfe M."/>
            <person name="Schoen O."/>
            <person name="Bargues M."/>
            <person name="Terol J."/>
            <person name="Climent J."/>
            <person name="Navarro P."/>
            <person name="Collado C."/>
            <person name="Perez-Perez A."/>
            <person name="Ottenwaelder B."/>
            <person name="Duchemin D."/>
            <person name="Cooke R."/>
            <person name="Laudie M."/>
            <person name="Berger-Llauro C."/>
            <person name="Purnelle B."/>
            <person name="Masuy D."/>
            <person name="de Haan M."/>
            <person name="Maarse A.C."/>
            <person name="Alcaraz J.-P."/>
            <person name="Cottet A."/>
            <person name="Casacuberta E."/>
            <person name="Monfort A."/>
            <person name="Argiriou A."/>
            <person name="Flores M."/>
            <person name="Liguori R."/>
            <person name="Vitale D."/>
            <person name="Mannhaupt G."/>
            <person name="Haase D."/>
            <person name="Schoof H."/>
            <person name="Rudd S."/>
            <person name="Zaccaria P."/>
            <person name="Mewes H.-W."/>
            <person name="Mayer K.F.X."/>
            <person name="Kaul S."/>
            <person name="Town C.D."/>
            <person name="Koo H.L."/>
            <person name="Tallon L.J."/>
            <person name="Jenkins J."/>
            <person name="Rooney T."/>
            <person name="Rizzo M."/>
            <person name="Walts A."/>
            <person name="Utterback T."/>
            <person name="Fujii C.Y."/>
            <person name="Shea T.P."/>
            <person name="Creasy T.H."/>
            <person name="Haas B."/>
            <person name="Maiti R."/>
            <person name="Wu D."/>
            <person name="Peterson J."/>
            <person name="Van Aken S."/>
            <person name="Pai G."/>
            <person name="Militscher J."/>
            <person name="Sellers P."/>
            <person name="Gill J.E."/>
            <person name="Feldblyum T.V."/>
            <person name="Preuss D."/>
            <person name="Lin X."/>
            <person name="Nierman W.C."/>
            <person name="Salzberg S.L."/>
            <person name="White O."/>
            <person name="Venter J.C."/>
            <person name="Fraser C.M."/>
            <person name="Kaneko T."/>
            <person name="Nakamura Y."/>
            <person name="Sato S."/>
            <person name="Kato T."/>
            <person name="Asamizu E."/>
            <person name="Sasamoto S."/>
            <person name="Kimura T."/>
            <person name="Idesawa K."/>
            <person name="Kawashima K."/>
            <person name="Kishida Y."/>
            <person name="Kiyokawa C."/>
            <person name="Kohara M."/>
            <person name="Matsumoto M."/>
            <person name="Matsuno A."/>
            <person name="Muraki A."/>
            <person name="Nakayama S."/>
            <person name="Nakazaki N."/>
            <person name="Shinpo S."/>
            <person name="Takeuchi C."/>
            <person name="Wada T."/>
            <person name="Watanabe A."/>
            <person name="Yamada M."/>
            <person name="Yasuda M."/>
            <person name="Tabata S."/>
        </authorList>
    </citation>
    <scope>NUCLEOTIDE SEQUENCE [LARGE SCALE GENOMIC DNA]</scope>
    <source>
        <strain>cv. Columbia</strain>
    </source>
</reference>
<reference key="3">
    <citation type="journal article" date="2017" name="Plant J.">
        <title>Araport11: a complete reannotation of the Arabidopsis thaliana reference genome.</title>
        <authorList>
            <person name="Cheng C.Y."/>
            <person name="Krishnakumar V."/>
            <person name="Chan A.P."/>
            <person name="Thibaud-Nissen F."/>
            <person name="Schobel S."/>
            <person name="Town C.D."/>
        </authorList>
    </citation>
    <scope>GENOME REANNOTATION</scope>
    <source>
        <strain>cv. Columbia</strain>
    </source>
</reference>
<reference key="4">
    <citation type="journal article" date="2003" name="Science">
        <title>Empirical analysis of transcriptional activity in the Arabidopsis genome.</title>
        <authorList>
            <person name="Yamada K."/>
            <person name="Lim J."/>
            <person name="Dale J.M."/>
            <person name="Chen H."/>
            <person name="Shinn P."/>
            <person name="Palm C.J."/>
            <person name="Southwick A.M."/>
            <person name="Wu H.C."/>
            <person name="Kim C.J."/>
            <person name="Nguyen M."/>
            <person name="Pham P.K."/>
            <person name="Cheuk R.F."/>
            <person name="Karlin-Newmann G."/>
            <person name="Liu S.X."/>
            <person name="Lam B."/>
            <person name="Sakano H."/>
            <person name="Wu T."/>
            <person name="Yu G."/>
            <person name="Miranda M."/>
            <person name="Quach H.L."/>
            <person name="Tripp M."/>
            <person name="Chang C.H."/>
            <person name="Lee J.M."/>
            <person name="Toriumi M.J."/>
            <person name="Chan M.M."/>
            <person name="Tang C.C."/>
            <person name="Onodera C.S."/>
            <person name="Deng J.M."/>
            <person name="Akiyama K."/>
            <person name="Ansari Y."/>
            <person name="Arakawa T."/>
            <person name="Banh J."/>
            <person name="Banno F."/>
            <person name="Bowser L."/>
            <person name="Brooks S.Y."/>
            <person name="Carninci P."/>
            <person name="Chao Q."/>
            <person name="Choy N."/>
            <person name="Enju A."/>
            <person name="Goldsmith A.D."/>
            <person name="Gurjal M."/>
            <person name="Hansen N.F."/>
            <person name="Hayashizaki Y."/>
            <person name="Johnson-Hopson C."/>
            <person name="Hsuan V.W."/>
            <person name="Iida K."/>
            <person name="Karnes M."/>
            <person name="Khan S."/>
            <person name="Koesema E."/>
            <person name="Ishida J."/>
            <person name="Jiang P.X."/>
            <person name="Jones T."/>
            <person name="Kawai J."/>
            <person name="Kamiya A."/>
            <person name="Meyers C."/>
            <person name="Nakajima M."/>
            <person name="Narusaka M."/>
            <person name="Seki M."/>
            <person name="Sakurai T."/>
            <person name="Satou M."/>
            <person name="Tamse R."/>
            <person name="Vaysberg M."/>
            <person name="Wallender E.K."/>
            <person name="Wong C."/>
            <person name="Yamamura Y."/>
            <person name="Yuan S."/>
            <person name="Shinozaki K."/>
            <person name="Davis R.W."/>
            <person name="Theologis A."/>
            <person name="Ecker J.R."/>
        </authorList>
    </citation>
    <scope>NUCLEOTIDE SEQUENCE [LARGE SCALE MRNA]</scope>
    <source>
        <strain>cv. Columbia</strain>
    </source>
</reference>
<reference key="5">
    <citation type="journal article" date="2010" name="Biochim. Biophys. Acta">
        <title>Functional characterization of lysophosphatidic acid phosphatase from Arabidopsis thaliana.</title>
        <authorList>
            <person name="Reddy V.S."/>
            <person name="Rao D.K."/>
            <person name="Rajasekharan R."/>
        </authorList>
    </citation>
    <scope>FUNCTION</scope>
    <scope>CATALYTIC ACTIVITY</scope>
    <scope>TISSUE SPECIFICITY</scope>
</reference>
<reference key="6">
    <citation type="journal article" date="2010" name="Mol. Plant">
        <title>Plant phosphatidylcholine-hydrolyzing phospholipases C NPC3 and NPC4 with roles in root development and brassinolide signaling in Arabidopsis thaliana.</title>
        <authorList>
            <person name="Wimalasekera R."/>
            <person name="Pejchar P."/>
            <person name="Holk A."/>
            <person name="Martinec J."/>
            <person name="Scherer G.F."/>
        </authorList>
    </citation>
    <scope>FUNCTION</scope>
    <scope>TISSUE SPECIFICITY</scope>
    <scope>INDUCTION BY AUXIN</scope>
    <scope>DISRUPTION PHENOTYPE</scope>
</reference>
<dbReference type="EC" id="3.1.3.106" evidence="2"/>
<dbReference type="EMBL" id="AB084295">
    <property type="protein sequence ID" value="BAC22510.1"/>
    <property type="molecule type" value="mRNA"/>
</dbReference>
<dbReference type="EMBL" id="AC009895">
    <property type="protein sequence ID" value="AAF01583.1"/>
    <property type="molecule type" value="Genomic_DNA"/>
</dbReference>
<dbReference type="EMBL" id="CP002686">
    <property type="protein sequence ID" value="AEE73953.1"/>
    <property type="molecule type" value="Genomic_DNA"/>
</dbReference>
<dbReference type="EMBL" id="AY065242">
    <property type="protein sequence ID" value="AAL38718.1"/>
    <property type="molecule type" value="mRNA"/>
</dbReference>
<dbReference type="EMBL" id="AY150477">
    <property type="protein sequence ID" value="AAN13002.1"/>
    <property type="molecule type" value="mRNA"/>
</dbReference>
<dbReference type="RefSeq" id="NP_187002.1">
    <property type="nucleotide sequence ID" value="NM_111223.5"/>
</dbReference>
<dbReference type="SMR" id="Q9SRQ6"/>
<dbReference type="BioGRID" id="6577">
    <property type="interactions" value="1"/>
</dbReference>
<dbReference type="FunCoup" id="Q9SRQ6">
    <property type="interactions" value="2"/>
</dbReference>
<dbReference type="IntAct" id="Q9SRQ6">
    <property type="interactions" value="1"/>
</dbReference>
<dbReference type="STRING" id="3702.Q9SRQ6"/>
<dbReference type="iPTMnet" id="Q9SRQ6"/>
<dbReference type="SwissPalm" id="Q9SRQ6"/>
<dbReference type="PaxDb" id="3702-AT3G03520.1"/>
<dbReference type="ProteomicsDB" id="249046"/>
<dbReference type="EnsemblPlants" id="AT3G03520.1">
    <property type="protein sequence ID" value="AT3G03520.1"/>
    <property type="gene ID" value="AT3G03520"/>
</dbReference>
<dbReference type="GeneID" id="821244"/>
<dbReference type="Gramene" id="AT3G03520.1">
    <property type="protein sequence ID" value="AT3G03520.1"/>
    <property type="gene ID" value="AT3G03520"/>
</dbReference>
<dbReference type="KEGG" id="ath:AT3G03520"/>
<dbReference type="Araport" id="AT3G03520"/>
<dbReference type="TAIR" id="AT3G03520">
    <property type="gene designation" value="NPC3"/>
</dbReference>
<dbReference type="eggNOG" id="ENOG502QPJ0">
    <property type="taxonomic scope" value="Eukaryota"/>
</dbReference>
<dbReference type="HOGENOM" id="CLU_029943_1_0_1"/>
<dbReference type="InParanoid" id="Q9SRQ6"/>
<dbReference type="OMA" id="IKDIYPF"/>
<dbReference type="OrthoDB" id="5135119at2759"/>
<dbReference type="PhylomeDB" id="Q9SRQ6"/>
<dbReference type="BioCyc" id="ARA:AT3G03520-MONOMER"/>
<dbReference type="BioCyc" id="MetaCyc:AT3G03520-MONOMER"/>
<dbReference type="BRENDA" id="3.1.4.3">
    <property type="organism ID" value="399"/>
</dbReference>
<dbReference type="PRO" id="PR:Q9SRQ6"/>
<dbReference type="Proteomes" id="UP000006548">
    <property type="component" value="Chromosome 3"/>
</dbReference>
<dbReference type="ExpressionAtlas" id="Q9SRQ6">
    <property type="expression patterns" value="baseline and differential"/>
</dbReference>
<dbReference type="GO" id="GO:0000325">
    <property type="term" value="C:plant-type vacuole"/>
    <property type="evidence" value="ECO:0007005"/>
    <property type="project" value="TAIR"/>
</dbReference>
<dbReference type="GO" id="GO:0009506">
    <property type="term" value="C:plasmodesma"/>
    <property type="evidence" value="ECO:0007005"/>
    <property type="project" value="TAIR"/>
</dbReference>
<dbReference type="GO" id="GO:0052642">
    <property type="term" value="F:lysophosphatidic acid phosphatase activity"/>
    <property type="evidence" value="ECO:0000314"/>
    <property type="project" value="TAIR"/>
</dbReference>
<dbReference type="GO" id="GO:0016036">
    <property type="term" value="P:cellular response to phosphate starvation"/>
    <property type="evidence" value="ECO:0000270"/>
    <property type="project" value="TAIR"/>
</dbReference>
<dbReference type="GO" id="GO:0006796">
    <property type="term" value="P:phosphate-containing compound metabolic process"/>
    <property type="evidence" value="ECO:0000314"/>
    <property type="project" value="TAIR"/>
</dbReference>
<dbReference type="FunFam" id="3.40.720.10:FF:000011">
    <property type="entry name" value="Non-specific phospholipase C1"/>
    <property type="match status" value="1"/>
</dbReference>
<dbReference type="FunFam" id="3.40.720.10:FF:000085">
    <property type="entry name" value="Non-specific phospholipase C3"/>
    <property type="match status" value="1"/>
</dbReference>
<dbReference type="Gene3D" id="3.40.720.10">
    <property type="entry name" value="Alkaline Phosphatase, subunit A"/>
    <property type="match status" value="2"/>
</dbReference>
<dbReference type="InterPro" id="IPR017850">
    <property type="entry name" value="Alkaline_phosphatase_core_sf"/>
</dbReference>
<dbReference type="InterPro" id="IPR007312">
    <property type="entry name" value="Phosphoesterase"/>
</dbReference>
<dbReference type="PANTHER" id="PTHR31956:SF32">
    <property type="entry name" value="NON-SPECIFIC PHOSPHOLIPASE C3"/>
    <property type="match status" value="1"/>
</dbReference>
<dbReference type="PANTHER" id="PTHR31956">
    <property type="entry name" value="NON-SPECIFIC PHOSPHOLIPASE C4-RELATED"/>
    <property type="match status" value="1"/>
</dbReference>
<dbReference type="Pfam" id="PF04185">
    <property type="entry name" value="Phosphoesterase"/>
    <property type="match status" value="1"/>
</dbReference>
<sequence>MVEETSSGGGSSASPIKTIVVLVQENRSFDHMLGWFKELNPEIDGVSESEPRSNPLSTSDPNSAQIFFGKESQNIDPDPGHSFQAIYEQVFGKPFSDESPYPDPKMNGFVQNAEAITKGMSEKVVMQGFPPEKLPVFKELVQEFAVCDRWFSSLPSSTQPNRLYVHAATSNGAFSNDTNTLVRGFPQRTVFESLEESGFTFGIYYQSFPNCLFYRNMRKLKYVDNFHQYHLSFKRHCKEGKLPNYVVIEPRYFKILSAPANDDHPKNDVVEGQNLVKEIYEALRASPQWNEILFVVVYDEHGGYYDHVPTPVIGVPNPDGLVGPEPYNFKFDRLGVRVPALLISPWIEPGTVLHEPNGPEPTSQFEHSSIPATLKKIFNLKSFLTKRDEWAGTLDAVINRTSPRTDCPVTLPELPRARDIDIGTQEEDEDLTDFQIELIQAAAVLKGDHIKDIYPFKLADKMKVLDAARYVEEAFTRFHGESKKAKEEGRDEHEIVDLSKGSTRHSTPKSFVQKLFSCLICDN</sequence>
<proteinExistence type="evidence at protein level"/>
<comment type="function">
    <text evidence="2 3">Possesses specific phosphatase activity toward lysophosphatidic acid (LPA) in vitro. Does not show phospholipase C activity. May play a role in signal transduction and storage lipid synthesis. May be involved in brassinolide-mediated signaling in root development.</text>
</comment>
<comment type="catalytic activity">
    <reaction evidence="2">
        <text>a 1-acyl-sn-glycero-3-phosphate + H2O = a 1-acyl-sn-glycerol + phosphate</text>
        <dbReference type="Rhea" id="RHEA:33155"/>
        <dbReference type="ChEBI" id="CHEBI:15377"/>
        <dbReference type="ChEBI" id="CHEBI:43474"/>
        <dbReference type="ChEBI" id="CHEBI:57970"/>
        <dbReference type="ChEBI" id="CHEBI:64683"/>
        <dbReference type="EC" id="3.1.3.106"/>
    </reaction>
</comment>
<comment type="tissue specificity">
    <text evidence="2 3">Expressed in root tips, cotyledons, on leaf margins, stems, young anthers and funiculus.</text>
</comment>
<comment type="induction">
    <text evidence="3">Induced by auxin in roots. Not induced by inorganic phosphate deprivation.</text>
</comment>
<comment type="disruption phenotype">
    <text evidence="3">No visible phenotype under normal growth conditions.</text>
</comment>
<comment type="similarity">
    <text evidence="4">Belongs to the bacterial phospholipase C family.</text>
</comment>
<evidence type="ECO:0000256" key="1">
    <source>
        <dbReference type="SAM" id="MobiDB-lite"/>
    </source>
</evidence>
<evidence type="ECO:0000269" key="2">
    <source>
    </source>
</evidence>
<evidence type="ECO:0000269" key="3">
    <source>
    </source>
</evidence>
<evidence type="ECO:0000305" key="4"/>